<organism>
    <name type="scientific">Dinoroseobacter shibae (strain DSM 16493 / NCIMB 14021 / DFL 12)</name>
    <dbReference type="NCBI Taxonomy" id="398580"/>
    <lineage>
        <taxon>Bacteria</taxon>
        <taxon>Pseudomonadati</taxon>
        <taxon>Pseudomonadota</taxon>
        <taxon>Alphaproteobacteria</taxon>
        <taxon>Rhodobacterales</taxon>
        <taxon>Roseobacteraceae</taxon>
        <taxon>Dinoroseobacter</taxon>
    </lineage>
</organism>
<feature type="chain" id="PRO_1000073943" description="Adenylosuccinate synthetase">
    <location>
        <begin position="1"/>
        <end position="431"/>
    </location>
</feature>
<feature type="active site" description="Proton acceptor" evidence="1">
    <location>
        <position position="13"/>
    </location>
</feature>
<feature type="active site" description="Proton donor" evidence="1">
    <location>
        <position position="41"/>
    </location>
</feature>
<feature type="binding site" evidence="1">
    <location>
        <begin position="12"/>
        <end position="18"/>
    </location>
    <ligand>
        <name>GTP</name>
        <dbReference type="ChEBI" id="CHEBI:37565"/>
    </ligand>
</feature>
<feature type="binding site" description="in other chain" evidence="1">
    <location>
        <begin position="13"/>
        <end position="16"/>
    </location>
    <ligand>
        <name>IMP</name>
        <dbReference type="ChEBI" id="CHEBI:58053"/>
        <note>ligand shared between dimeric partners</note>
    </ligand>
</feature>
<feature type="binding site" evidence="1">
    <location>
        <position position="13"/>
    </location>
    <ligand>
        <name>Mg(2+)</name>
        <dbReference type="ChEBI" id="CHEBI:18420"/>
    </ligand>
</feature>
<feature type="binding site" description="in other chain" evidence="1">
    <location>
        <begin position="38"/>
        <end position="41"/>
    </location>
    <ligand>
        <name>IMP</name>
        <dbReference type="ChEBI" id="CHEBI:58053"/>
        <note>ligand shared between dimeric partners</note>
    </ligand>
</feature>
<feature type="binding site" evidence="1">
    <location>
        <begin position="40"/>
        <end position="42"/>
    </location>
    <ligand>
        <name>GTP</name>
        <dbReference type="ChEBI" id="CHEBI:37565"/>
    </ligand>
</feature>
<feature type="binding site" evidence="1">
    <location>
        <position position="40"/>
    </location>
    <ligand>
        <name>Mg(2+)</name>
        <dbReference type="ChEBI" id="CHEBI:18420"/>
    </ligand>
</feature>
<feature type="binding site" description="in other chain" evidence="1">
    <location>
        <position position="131"/>
    </location>
    <ligand>
        <name>IMP</name>
        <dbReference type="ChEBI" id="CHEBI:58053"/>
        <note>ligand shared between dimeric partners</note>
    </ligand>
</feature>
<feature type="binding site" evidence="1">
    <location>
        <position position="145"/>
    </location>
    <ligand>
        <name>IMP</name>
        <dbReference type="ChEBI" id="CHEBI:58053"/>
        <note>ligand shared between dimeric partners</note>
    </ligand>
</feature>
<feature type="binding site" description="in other chain" evidence="1">
    <location>
        <position position="225"/>
    </location>
    <ligand>
        <name>IMP</name>
        <dbReference type="ChEBI" id="CHEBI:58053"/>
        <note>ligand shared between dimeric partners</note>
    </ligand>
</feature>
<feature type="binding site" description="in other chain" evidence="1">
    <location>
        <position position="240"/>
    </location>
    <ligand>
        <name>IMP</name>
        <dbReference type="ChEBI" id="CHEBI:58053"/>
        <note>ligand shared between dimeric partners</note>
    </ligand>
</feature>
<feature type="binding site" evidence="1">
    <location>
        <begin position="300"/>
        <end position="306"/>
    </location>
    <ligand>
        <name>substrate</name>
    </ligand>
</feature>
<feature type="binding site" description="in other chain" evidence="1">
    <location>
        <position position="304"/>
    </location>
    <ligand>
        <name>IMP</name>
        <dbReference type="ChEBI" id="CHEBI:58053"/>
        <note>ligand shared between dimeric partners</note>
    </ligand>
</feature>
<feature type="binding site" evidence="1">
    <location>
        <position position="306"/>
    </location>
    <ligand>
        <name>GTP</name>
        <dbReference type="ChEBI" id="CHEBI:37565"/>
    </ligand>
</feature>
<feature type="binding site" evidence="1">
    <location>
        <begin position="332"/>
        <end position="334"/>
    </location>
    <ligand>
        <name>GTP</name>
        <dbReference type="ChEBI" id="CHEBI:37565"/>
    </ligand>
</feature>
<feature type="binding site" evidence="1">
    <location>
        <begin position="414"/>
        <end position="416"/>
    </location>
    <ligand>
        <name>GTP</name>
        <dbReference type="ChEBI" id="CHEBI:37565"/>
    </ligand>
</feature>
<keyword id="KW-0963">Cytoplasm</keyword>
<keyword id="KW-0342">GTP-binding</keyword>
<keyword id="KW-0436">Ligase</keyword>
<keyword id="KW-0460">Magnesium</keyword>
<keyword id="KW-0479">Metal-binding</keyword>
<keyword id="KW-0547">Nucleotide-binding</keyword>
<keyword id="KW-0658">Purine biosynthesis</keyword>
<keyword id="KW-1185">Reference proteome</keyword>
<dbReference type="EC" id="6.3.4.4" evidence="1"/>
<dbReference type="EMBL" id="CP000830">
    <property type="protein sequence ID" value="ABV94475.1"/>
    <property type="molecule type" value="Genomic_DNA"/>
</dbReference>
<dbReference type="RefSeq" id="WP_012179403.1">
    <property type="nucleotide sequence ID" value="NC_009952.1"/>
</dbReference>
<dbReference type="SMR" id="A8LIN4"/>
<dbReference type="STRING" id="398580.Dshi_2742"/>
<dbReference type="KEGG" id="dsh:Dshi_2742"/>
<dbReference type="eggNOG" id="COG0104">
    <property type="taxonomic scope" value="Bacteria"/>
</dbReference>
<dbReference type="HOGENOM" id="CLU_029848_0_0_5"/>
<dbReference type="OrthoDB" id="9807553at2"/>
<dbReference type="UniPathway" id="UPA00075">
    <property type="reaction ID" value="UER00335"/>
</dbReference>
<dbReference type="Proteomes" id="UP000006833">
    <property type="component" value="Chromosome"/>
</dbReference>
<dbReference type="GO" id="GO:0005737">
    <property type="term" value="C:cytoplasm"/>
    <property type="evidence" value="ECO:0007669"/>
    <property type="project" value="UniProtKB-SubCell"/>
</dbReference>
<dbReference type="GO" id="GO:0004019">
    <property type="term" value="F:adenylosuccinate synthase activity"/>
    <property type="evidence" value="ECO:0007669"/>
    <property type="project" value="UniProtKB-UniRule"/>
</dbReference>
<dbReference type="GO" id="GO:0005525">
    <property type="term" value="F:GTP binding"/>
    <property type="evidence" value="ECO:0007669"/>
    <property type="project" value="UniProtKB-UniRule"/>
</dbReference>
<dbReference type="GO" id="GO:0000287">
    <property type="term" value="F:magnesium ion binding"/>
    <property type="evidence" value="ECO:0007669"/>
    <property type="project" value="UniProtKB-UniRule"/>
</dbReference>
<dbReference type="GO" id="GO:0044208">
    <property type="term" value="P:'de novo' AMP biosynthetic process"/>
    <property type="evidence" value="ECO:0007669"/>
    <property type="project" value="UniProtKB-UniRule"/>
</dbReference>
<dbReference type="GO" id="GO:0046040">
    <property type="term" value="P:IMP metabolic process"/>
    <property type="evidence" value="ECO:0007669"/>
    <property type="project" value="TreeGrafter"/>
</dbReference>
<dbReference type="CDD" id="cd03108">
    <property type="entry name" value="AdSS"/>
    <property type="match status" value="1"/>
</dbReference>
<dbReference type="FunFam" id="1.10.300.10:FF:000001">
    <property type="entry name" value="Adenylosuccinate synthetase"/>
    <property type="match status" value="1"/>
</dbReference>
<dbReference type="FunFam" id="3.90.170.10:FF:000001">
    <property type="entry name" value="Adenylosuccinate synthetase"/>
    <property type="match status" value="1"/>
</dbReference>
<dbReference type="Gene3D" id="3.40.440.10">
    <property type="entry name" value="Adenylosuccinate Synthetase, subunit A, domain 1"/>
    <property type="match status" value="1"/>
</dbReference>
<dbReference type="Gene3D" id="1.10.300.10">
    <property type="entry name" value="Adenylosuccinate Synthetase, subunit A, domain 2"/>
    <property type="match status" value="1"/>
</dbReference>
<dbReference type="Gene3D" id="3.90.170.10">
    <property type="entry name" value="Adenylosuccinate Synthetase, subunit A, domain 3"/>
    <property type="match status" value="1"/>
</dbReference>
<dbReference type="HAMAP" id="MF_00011">
    <property type="entry name" value="Adenylosucc_synth"/>
    <property type="match status" value="1"/>
</dbReference>
<dbReference type="InterPro" id="IPR018220">
    <property type="entry name" value="Adenylosuccin_syn_GTP-bd"/>
</dbReference>
<dbReference type="InterPro" id="IPR033128">
    <property type="entry name" value="Adenylosuccin_syn_Lys_AS"/>
</dbReference>
<dbReference type="InterPro" id="IPR042109">
    <property type="entry name" value="Adenylosuccinate_synth_dom1"/>
</dbReference>
<dbReference type="InterPro" id="IPR042110">
    <property type="entry name" value="Adenylosuccinate_synth_dom2"/>
</dbReference>
<dbReference type="InterPro" id="IPR042111">
    <property type="entry name" value="Adenylosuccinate_synth_dom3"/>
</dbReference>
<dbReference type="InterPro" id="IPR001114">
    <property type="entry name" value="Adenylosuccinate_synthetase"/>
</dbReference>
<dbReference type="InterPro" id="IPR027417">
    <property type="entry name" value="P-loop_NTPase"/>
</dbReference>
<dbReference type="NCBIfam" id="NF002223">
    <property type="entry name" value="PRK01117.1"/>
    <property type="match status" value="1"/>
</dbReference>
<dbReference type="NCBIfam" id="TIGR00184">
    <property type="entry name" value="purA"/>
    <property type="match status" value="1"/>
</dbReference>
<dbReference type="PANTHER" id="PTHR11846">
    <property type="entry name" value="ADENYLOSUCCINATE SYNTHETASE"/>
    <property type="match status" value="1"/>
</dbReference>
<dbReference type="PANTHER" id="PTHR11846:SF0">
    <property type="entry name" value="ADENYLOSUCCINATE SYNTHETASE"/>
    <property type="match status" value="1"/>
</dbReference>
<dbReference type="Pfam" id="PF00709">
    <property type="entry name" value="Adenylsucc_synt"/>
    <property type="match status" value="1"/>
</dbReference>
<dbReference type="SMART" id="SM00788">
    <property type="entry name" value="Adenylsucc_synt"/>
    <property type="match status" value="1"/>
</dbReference>
<dbReference type="SUPFAM" id="SSF52540">
    <property type="entry name" value="P-loop containing nucleoside triphosphate hydrolases"/>
    <property type="match status" value="1"/>
</dbReference>
<dbReference type="PROSITE" id="PS01266">
    <property type="entry name" value="ADENYLOSUCCIN_SYN_1"/>
    <property type="match status" value="1"/>
</dbReference>
<dbReference type="PROSITE" id="PS00513">
    <property type="entry name" value="ADENYLOSUCCIN_SYN_2"/>
    <property type="match status" value="1"/>
</dbReference>
<comment type="function">
    <text evidence="1">Plays an important role in the de novo pathway of purine nucleotide biosynthesis. Catalyzes the first committed step in the biosynthesis of AMP from IMP.</text>
</comment>
<comment type="catalytic activity">
    <reaction evidence="1">
        <text>IMP + L-aspartate + GTP = N(6)-(1,2-dicarboxyethyl)-AMP + GDP + phosphate + 2 H(+)</text>
        <dbReference type="Rhea" id="RHEA:15753"/>
        <dbReference type="ChEBI" id="CHEBI:15378"/>
        <dbReference type="ChEBI" id="CHEBI:29991"/>
        <dbReference type="ChEBI" id="CHEBI:37565"/>
        <dbReference type="ChEBI" id="CHEBI:43474"/>
        <dbReference type="ChEBI" id="CHEBI:57567"/>
        <dbReference type="ChEBI" id="CHEBI:58053"/>
        <dbReference type="ChEBI" id="CHEBI:58189"/>
        <dbReference type="EC" id="6.3.4.4"/>
    </reaction>
</comment>
<comment type="cofactor">
    <cofactor evidence="1">
        <name>Mg(2+)</name>
        <dbReference type="ChEBI" id="CHEBI:18420"/>
    </cofactor>
    <text evidence="1">Binds 1 Mg(2+) ion per subunit.</text>
</comment>
<comment type="pathway">
    <text evidence="1">Purine metabolism; AMP biosynthesis via de novo pathway; AMP from IMP: step 1/2.</text>
</comment>
<comment type="subunit">
    <text evidence="1">Homodimer.</text>
</comment>
<comment type="subcellular location">
    <subcellularLocation>
        <location evidence="1">Cytoplasm</location>
    </subcellularLocation>
</comment>
<comment type="similarity">
    <text evidence="1">Belongs to the adenylosuccinate synthetase family.</text>
</comment>
<sequence>MANVVVVGAQWGDEGKGKIVDWLSERADVIARFQGGHNAGHTLVIDGTVYKLHALPSGVVRGGKLSVIGNGVVLDPWHLVAEIETVRAQGVEITPETLMIAENTPLILPIHGELDRAREEAASKGTKIGTTGRGIGPAYEDKVGRRSVRVADLADDATLEARVDRALQHHDPLRRGLGIEAVDRDGLIAQLKEIAPAILTYAAPVWKVLNEKRKAGHRILFEGAQGALLDIDFGTYPFVTSSNVIAGQAATGVGIGPGAIDYVLGIVKAYTTRVGEGPFPTELDDADGQRLGERGHEFGTTTGRKRRCGWFDAALVRQTCATSGVNGIALTKLDVLDGFETLKICVGYDLDGKVLDYLPTAADQQGRCAPIYEEMDGWSESTEGARSWADLPGNAVKYVRRIEELIQCPVALLSTSPERDDTILVTDPFAD</sequence>
<accession>A8LIN4</accession>
<proteinExistence type="inferred from homology"/>
<protein>
    <recommendedName>
        <fullName evidence="1">Adenylosuccinate synthetase</fullName>
        <shortName evidence="1">AMPSase</shortName>
        <shortName evidence="1">AdSS</shortName>
        <ecNumber evidence="1">6.3.4.4</ecNumber>
    </recommendedName>
    <alternativeName>
        <fullName evidence="1">IMP--aspartate ligase</fullName>
    </alternativeName>
</protein>
<gene>
    <name evidence="1" type="primary">purA</name>
    <name type="ordered locus">Dshi_2742</name>
</gene>
<name>PURA_DINSH</name>
<reference key="1">
    <citation type="journal article" date="2010" name="ISME J.">
        <title>The complete genome sequence of the algal symbiont Dinoroseobacter shibae: a hitchhiker's guide to life in the sea.</title>
        <authorList>
            <person name="Wagner-Dobler I."/>
            <person name="Ballhausen B."/>
            <person name="Berger M."/>
            <person name="Brinkhoff T."/>
            <person name="Buchholz I."/>
            <person name="Bunk B."/>
            <person name="Cypionka H."/>
            <person name="Daniel R."/>
            <person name="Drepper T."/>
            <person name="Gerdts G."/>
            <person name="Hahnke S."/>
            <person name="Han C."/>
            <person name="Jahn D."/>
            <person name="Kalhoefer D."/>
            <person name="Kiss H."/>
            <person name="Klenk H.P."/>
            <person name="Kyrpides N."/>
            <person name="Liebl W."/>
            <person name="Liesegang H."/>
            <person name="Meincke L."/>
            <person name="Pati A."/>
            <person name="Petersen J."/>
            <person name="Piekarski T."/>
            <person name="Pommerenke C."/>
            <person name="Pradella S."/>
            <person name="Pukall R."/>
            <person name="Rabus R."/>
            <person name="Stackebrandt E."/>
            <person name="Thole S."/>
            <person name="Thompson L."/>
            <person name="Tielen P."/>
            <person name="Tomasch J."/>
            <person name="von Jan M."/>
            <person name="Wanphrut N."/>
            <person name="Wichels A."/>
            <person name="Zech H."/>
            <person name="Simon M."/>
        </authorList>
    </citation>
    <scope>NUCLEOTIDE SEQUENCE [LARGE SCALE GENOMIC DNA]</scope>
    <source>
        <strain>DSM 16493 / NCIMB 14021 / DFL 12</strain>
    </source>
</reference>
<evidence type="ECO:0000255" key="1">
    <source>
        <dbReference type="HAMAP-Rule" id="MF_00011"/>
    </source>
</evidence>